<organism>
    <name type="scientific">Schizosaccharomyces pombe (strain 972 / ATCC 24843)</name>
    <name type="common">Fission yeast</name>
    <dbReference type="NCBI Taxonomy" id="284812"/>
    <lineage>
        <taxon>Eukaryota</taxon>
        <taxon>Fungi</taxon>
        <taxon>Dikarya</taxon>
        <taxon>Ascomycota</taxon>
        <taxon>Taphrinomycotina</taxon>
        <taxon>Schizosaccharomycetes</taxon>
        <taxon>Schizosaccharomycetales</taxon>
        <taxon>Schizosaccharomycetaceae</taxon>
        <taxon>Schizosaccharomyces</taxon>
    </lineage>
</organism>
<feature type="chain" id="PRO_0000068744" description="Putative acetyltransferase C18B11.09c">
    <location>
        <begin position="1"/>
        <end position="207"/>
    </location>
</feature>
<name>YA39_SCHPO</name>
<protein>
    <recommendedName>
        <fullName>Putative acetyltransferase C18B11.09c</fullName>
        <ecNumber>2.3.1.-</ecNumber>
    </recommendedName>
</protein>
<sequence>MTRTRVQKMIPKTIEYQKMISGQPYKAYDEELTQARCNAKKLMRRFNDTMGDLENVGPAELIKRRAELLAEVFVFDESSAPEIEPPMAFDYGFNVHFGKKFFANYNCTFLDVAIITIGNNVMLGPNVQLCTATHPLDFKARNSGIEFGLPINIQDNVWIGMGVIVLPGVTIGEGSVIGAGAVVTKDIPPNTLAVGSPAKPIRKIENE</sequence>
<keyword id="KW-0012">Acyltransferase</keyword>
<keyword id="KW-1185">Reference proteome</keyword>
<keyword id="KW-0677">Repeat</keyword>
<keyword id="KW-0808">Transferase</keyword>
<gene>
    <name type="ORF">SPAC18B11.09c</name>
</gene>
<evidence type="ECO:0000305" key="1"/>
<reference key="1">
    <citation type="journal article" date="2002" name="Nature">
        <title>The genome sequence of Schizosaccharomyces pombe.</title>
        <authorList>
            <person name="Wood V."/>
            <person name="Gwilliam R."/>
            <person name="Rajandream M.A."/>
            <person name="Lyne M.H."/>
            <person name="Lyne R."/>
            <person name="Stewart A."/>
            <person name="Sgouros J.G."/>
            <person name="Peat N."/>
            <person name="Hayles J."/>
            <person name="Baker S.G."/>
            <person name="Basham D."/>
            <person name="Bowman S."/>
            <person name="Brooks K."/>
            <person name="Brown D."/>
            <person name="Brown S."/>
            <person name="Chillingworth T."/>
            <person name="Churcher C.M."/>
            <person name="Collins M."/>
            <person name="Connor R."/>
            <person name="Cronin A."/>
            <person name="Davis P."/>
            <person name="Feltwell T."/>
            <person name="Fraser A."/>
            <person name="Gentles S."/>
            <person name="Goble A."/>
            <person name="Hamlin N."/>
            <person name="Harris D.E."/>
            <person name="Hidalgo J."/>
            <person name="Hodgson G."/>
            <person name="Holroyd S."/>
            <person name="Hornsby T."/>
            <person name="Howarth S."/>
            <person name="Huckle E.J."/>
            <person name="Hunt S."/>
            <person name="Jagels K."/>
            <person name="James K.D."/>
            <person name="Jones L."/>
            <person name="Jones M."/>
            <person name="Leather S."/>
            <person name="McDonald S."/>
            <person name="McLean J."/>
            <person name="Mooney P."/>
            <person name="Moule S."/>
            <person name="Mungall K.L."/>
            <person name="Murphy L.D."/>
            <person name="Niblett D."/>
            <person name="Odell C."/>
            <person name="Oliver K."/>
            <person name="O'Neil S."/>
            <person name="Pearson D."/>
            <person name="Quail M.A."/>
            <person name="Rabbinowitsch E."/>
            <person name="Rutherford K.M."/>
            <person name="Rutter S."/>
            <person name="Saunders D."/>
            <person name="Seeger K."/>
            <person name="Sharp S."/>
            <person name="Skelton J."/>
            <person name="Simmonds M.N."/>
            <person name="Squares R."/>
            <person name="Squares S."/>
            <person name="Stevens K."/>
            <person name="Taylor K."/>
            <person name="Taylor R.G."/>
            <person name="Tivey A."/>
            <person name="Walsh S.V."/>
            <person name="Warren T."/>
            <person name="Whitehead S."/>
            <person name="Woodward J.R."/>
            <person name="Volckaert G."/>
            <person name="Aert R."/>
            <person name="Robben J."/>
            <person name="Grymonprez B."/>
            <person name="Weltjens I."/>
            <person name="Vanstreels E."/>
            <person name="Rieger M."/>
            <person name="Schaefer M."/>
            <person name="Mueller-Auer S."/>
            <person name="Gabel C."/>
            <person name="Fuchs M."/>
            <person name="Duesterhoeft A."/>
            <person name="Fritzc C."/>
            <person name="Holzer E."/>
            <person name="Moestl D."/>
            <person name="Hilbert H."/>
            <person name="Borzym K."/>
            <person name="Langer I."/>
            <person name="Beck A."/>
            <person name="Lehrach H."/>
            <person name="Reinhardt R."/>
            <person name="Pohl T.M."/>
            <person name="Eger P."/>
            <person name="Zimmermann W."/>
            <person name="Wedler H."/>
            <person name="Wambutt R."/>
            <person name="Purnelle B."/>
            <person name="Goffeau A."/>
            <person name="Cadieu E."/>
            <person name="Dreano S."/>
            <person name="Gloux S."/>
            <person name="Lelaure V."/>
            <person name="Mottier S."/>
            <person name="Galibert F."/>
            <person name="Aves S.J."/>
            <person name="Xiang Z."/>
            <person name="Hunt C."/>
            <person name="Moore K."/>
            <person name="Hurst S.M."/>
            <person name="Lucas M."/>
            <person name="Rochet M."/>
            <person name="Gaillardin C."/>
            <person name="Tallada V.A."/>
            <person name="Garzon A."/>
            <person name="Thode G."/>
            <person name="Daga R.R."/>
            <person name="Cruzado L."/>
            <person name="Jimenez J."/>
            <person name="Sanchez M."/>
            <person name="del Rey F."/>
            <person name="Benito J."/>
            <person name="Dominguez A."/>
            <person name="Revuelta J.L."/>
            <person name="Moreno S."/>
            <person name="Armstrong J."/>
            <person name="Forsburg S.L."/>
            <person name="Cerutti L."/>
            <person name="Lowe T."/>
            <person name="McCombie W.R."/>
            <person name="Paulsen I."/>
            <person name="Potashkin J."/>
            <person name="Shpakovski G.V."/>
            <person name="Ussery D."/>
            <person name="Barrell B.G."/>
            <person name="Nurse P."/>
        </authorList>
    </citation>
    <scope>NUCLEOTIDE SEQUENCE [LARGE SCALE GENOMIC DNA]</scope>
    <source>
        <strain>972 / ATCC 24843</strain>
    </source>
</reference>
<proteinExistence type="inferred from homology"/>
<comment type="similarity">
    <text evidence="1">Belongs to the transferase hexapeptide repeat family.</text>
</comment>
<accession>Q09707</accession>
<dbReference type="EC" id="2.3.1.-"/>
<dbReference type="EMBL" id="CU329670">
    <property type="protein sequence ID" value="CAA90593.1"/>
    <property type="molecule type" value="Genomic_DNA"/>
</dbReference>
<dbReference type="PIR" id="T37905">
    <property type="entry name" value="T37905"/>
</dbReference>
<dbReference type="RefSeq" id="NP_592874.1">
    <property type="nucleotide sequence ID" value="NM_001018274.2"/>
</dbReference>
<dbReference type="SMR" id="Q09707"/>
<dbReference type="BioGRID" id="279034">
    <property type="interactions" value="13"/>
</dbReference>
<dbReference type="FunCoup" id="Q09707">
    <property type="interactions" value="9"/>
</dbReference>
<dbReference type="STRING" id="284812.Q09707"/>
<dbReference type="PaxDb" id="4896-SPAC18B11.09c.1"/>
<dbReference type="EnsemblFungi" id="SPAC18B11.09c.1">
    <property type="protein sequence ID" value="SPAC18B11.09c.1:pep"/>
    <property type="gene ID" value="SPAC18B11.09c"/>
</dbReference>
<dbReference type="KEGG" id="spo:2542578"/>
<dbReference type="PomBase" id="SPAC18B11.09c"/>
<dbReference type="VEuPathDB" id="FungiDB:SPAC18B11.09c"/>
<dbReference type="eggNOG" id="KOG4750">
    <property type="taxonomic scope" value="Eukaryota"/>
</dbReference>
<dbReference type="HOGENOM" id="CLU_051638_3_0_1"/>
<dbReference type="InParanoid" id="Q09707"/>
<dbReference type="OMA" id="KVAQFNI"/>
<dbReference type="PhylomeDB" id="Q09707"/>
<dbReference type="PRO" id="PR:Q09707"/>
<dbReference type="Proteomes" id="UP000002485">
    <property type="component" value="Chromosome I"/>
</dbReference>
<dbReference type="GO" id="GO:0005829">
    <property type="term" value="C:cytosol"/>
    <property type="evidence" value="ECO:0007005"/>
    <property type="project" value="PomBase"/>
</dbReference>
<dbReference type="GO" id="GO:0005634">
    <property type="term" value="C:nucleus"/>
    <property type="evidence" value="ECO:0007005"/>
    <property type="project" value="PomBase"/>
</dbReference>
<dbReference type="GO" id="GO:0016407">
    <property type="term" value="F:acetyltransferase activity"/>
    <property type="evidence" value="ECO:0007669"/>
    <property type="project" value="InterPro"/>
</dbReference>
<dbReference type="GO" id="GO:0008374">
    <property type="term" value="F:O-acyltransferase activity"/>
    <property type="evidence" value="ECO:0000318"/>
    <property type="project" value="GO_Central"/>
</dbReference>
<dbReference type="CDD" id="cd03357">
    <property type="entry name" value="LbH_MAT_GAT"/>
    <property type="match status" value="1"/>
</dbReference>
<dbReference type="FunFam" id="2.160.10.10:FF:000008">
    <property type="entry name" value="Maltose O-acetyltransferase"/>
    <property type="match status" value="1"/>
</dbReference>
<dbReference type="Gene3D" id="2.160.10.10">
    <property type="entry name" value="Hexapeptide repeat proteins"/>
    <property type="match status" value="1"/>
</dbReference>
<dbReference type="InterPro" id="IPR001451">
    <property type="entry name" value="Hexapep"/>
</dbReference>
<dbReference type="InterPro" id="IPR018357">
    <property type="entry name" value="Hexapep_transf_CS"/>
</dbReference>
<dbReference type="InterPro" id="IPR051159">
    <property type="entry name" value="Hexapeptide_acetyltransf"/>
</dbReference>
<dbReference type="InterPro" id="IPR024688">
    <property type="entry name" value="Mac_dom"/>
</dbReference>
<dbReference type="InterPro" id="IPR011004">
    <property type="entry name" value="Trimer_LpxA-like_sf"/>
</dbReference>
<dbReference type="PANTHER" id="PTHR23416:SF23">
    <property type="entry name" value="ACETYLTRANSFERASE C18B11.09C-RELATED"/>
    <property type="match status" value="1"/>
</dbReference>
<dbReference type="PANTHER" id="PTHR23416">
    <property type="entry name" value="SIALIC ACID SYNTHASE-RELATED"/>
    <property type="match status" value="1"/>
</dbReference>
<dbReference type="Pfam" id="PF00132">
    <property type="entry name" value="Hexapep"/>
    <property type="match status" value="1"/>
</dbReference>
<dbReference type="Pfam" id="PF12464">
    <property type="entry name" value="Mac"/>
    <property type="match status" value="1"/>
</dbReference>
<dbReference type="SMART" id="SM01266">
    <property type="entry name" value="Mac"/>
    <property type="match status" value="1"/>
</dbReference>
<dbReference type="SUPFAM" id="SSF51161">
    <property type="entry name" value="Trimeric LpxA-like enzymes"/>
    <property type="match status" value="1"/>
</dbReference>
<dbReference type="PROSITE" id="PS00101">
    <property type="entry name" value="HEXAPEP_TRANSFERASES"/>
    <property type="match status" value="1"/>
</dbReference>